<evidence type="ECO:0000255" key="1">
    <source>
        <dbReference type="HAMAP-Rule" id="MF_01241"/>
    </source>
</evidence>
<accession>A4W844</accession>
<sequence>MRLIPLATAEQVGKWAARHIVNRINAFKPTADRPFVLGLPTGGTPLTAYKALVEMHKAGQVSFKHVVTFNMDEYVGLAKEHPESYHSFMHRNFFDHVDIPAENINLLNGNAPDIDAECRQYEEKIRSYGKINLFMGGVGNDGHIAFNEPASSLASRTRIKTLTHDTRVANSRFFDGDVSQVPKYALTVGVGTLLDAEEVMILVLGNVKAQALQAAVEGNVNHMWTISCLQLHPKAVVVCDEPSTMELKVKTLKYFNELEAENIKGL</sequence>
<proteinExistence type="inferred from homology"/>
<name>NAGB_ENT38</name>
<dbReference type="EC" id="3.5.99.6" evidence="1"/>
<dbReference type="EMBL" id="CP000653">
    <property type="protein sequence ID" value="ABP59874.1"/>
    <property type="molecule type" value="Genomic_DNA"/>
</dbReference>
<dbReference type="RefSeq" id="WP_012016593.1">
    <property type="nucleotide sequence ID" value="NC_009436.1"/>
</dbReference>
<dbReference type="SMR" id="A4W844"/>
<dbReference type="STRING" id="399742.Ent638_1193"/>
<dbReference type="GeneID" id="93308282"/>
<dbReference type="KEGG" id="ent:Ent638_1193"/>
<dbReference type="eggNOG" id="COG0363">
    <property type="taxonomic scope" value="Bacteria"/>
</dbReference>
<dbReference type="HOGENOM" id="CLU_049611_0_1_6"/>
<dbReference type="OrthoDB" id="9791139at2"/>
<dbReference type="UniPathway" id="UPA00629">
    <property type="reaction ID" value="UER00684"/>
</dbReference>
<dbReference type="Proteomes" id="UP000000230">
    <property type="component" value="Chromosome"/>
</dbReference>
<dbReference type="GO" id="GO:0005737">
    <property type="term" value="C:cytoplasm"/>
    <property type="evidence" value="ECO:0007669"/>
    <property type="project" value="TreeGrafter"/>
</dbReference>
<dbReference type="GO" id="GO:0004342">
    <property type="term" value="F:glucosamine-6-phosphate deaminase activity"/>
    <property type="evidence" value="ECO:0007669"/>
    <property type="project" value="UniProtKB-UniRule"/>
</dbReference>
<dbReference type="GO" id="GO:0042802">
    <property type="term" value="F:identical protein binding"/>
    <property type="evidence" value="ECO:0007669"/>
    <property type="project" value="TreeGrafter"/>
</dbReference>
<dbReference type="GO" id="GO:0005975">
    <property type="term" value="P:carbohydrate metabolic process"/>
    <property type="evidence" value="ECO:0007669"/>
    <property type="project" value="InterPro"/>
</dbReference>
<dbReference type="GO" id="GO:0006043">
    <property type="term" value="P:glucosamine catabolic process"/>
    <property type="evidence" value="ECO:0007669"/>
    <property type="project" value="TreeGrafter"/>
</dbReference>
<dbReference type="GO" id="GO:0006046">
    <property type="term" value="P:N-acetylglucosamine catabolic process"/>
    <property type="evidence" value="ECO:0007669"/>
    <property type="project" value="TreeGrafter"/>
</dbReference>
<dbReference type="GO" id="GO:0019262">
    <property type="term" value="P:N-acetylneuraminate catabolic process"/>
    <property type="evidence" value="ECO:0007669"/>
    <property type="project" value="UniProtKB-UniRule"/>
</dbReference>
<dbReference type="CDD" id="cd01399">
    <property type="entry name" value="GlcN6P_deaminase"/>
    <property type="match status" value="1"/>
</dbReference>
<dbReference type="FunFam" id="3.40.50.1360:FF:000002">
    <property type="entry name" value="Glucosamine-6-phosphate deaminase"/>
    <property type="match status" value="1"/>
</dbReference>
<dbReference type="Gene3D" id="3.40.50.1360">
    <property type="match status" value="1"/>
</dbReference>
<dbReference type="HAMAP" id="MF_01241">
    <property type="entry name" value="GlcN6P_deamin"/>
    <property type="match status" value="1"/>
</dbReference>
<dbReference type="InterPro" id="IPR006148">
    <property type="entry name" value="Glc/Gal-6P_isomerase"/>
</dbReference>
<dbReference type="InterPro" id="IPR004547">
    <property type="entry name" value="Glucosamine6P_isomerase"/>
</dbReference>
<dbReference type="InterPro" id="IPR018321">
    <property type="entry name" value="Glucosamine6P_isomerase_CS"/>
</dbReference>
<dbReference type="InterPro" id="IPR037171">
    <property type="entry name" value="NagB/RpiA_transferase-like"/>
</dbReference>
<dbReference type="NCBIfam" id="TIGR00502">
    <property type="entry name" value="nagB"/>
    <property type="match status" value="1"/>
</dbReference>
<dbReference type="NCBIfam" id="NF001685">
    <property type="entry name" value="PRK00443.1-5"/>
    <property type="match status" value="1"/>
</dbReference>
<dbReference type="PANTHER" id="PTHR11280">
    <property type="entry name" value="GLUCOSAMINE-6-PHOSPHATE ISOMERASE"/>
    <property type="match status" value="1"/>
</dbReference>
<dbReference type="PANTHER" id="PTHR11280:SF5">
    <property type="entry name" value="GLUCOSAMINE-6-PHOSPHATE ISOMERASE"/>
    <property type="match status" value="1"/>
</dbReference>
<dbReference type="Pfam" id="PF01182">
    <property type="entry name" value="Glucosamine_iso"/>
    <property type="match status" value="1"/>
</dbReference>
<dbReference type="SUPFAM" id="SSF100950">
    <property type="entry name" value="NagB/RpiA/CoA transferase-like"/>
    <property type="match status" value="1"/>
</dbReference>
<dbReference type="PROSITE" id="PS01161">
    <property type="entry name" value="GLC_GALNAC_ISOMERASE"/>
    <property type="match status" value="1"/>
</dbReference>
<feature type="chain" id="PRO_1000066982" description="Glucosamine-6-phosphate deaminase">
    <location>
        <begin position="1"/>
        <end position="266"/>
    </location>
</feature>
<feature type="active site" description="Proton acceptor; for enolization step" evidence="1">
    <location>
        <position position="72"/>
    </location>
</feature>
<feature type="active site" description="For ring-opening step" evidence="1">
    <location>
        <position position="141"/>
    </location>
</feature>
<feature type="active site" description="Proton acceptor; for ring-opening step" evidence="1">
    <location>
        <position position="143"/>
    </location>
</feature>
<feature type="active site" description="For ring-opening step" evidence="1">
    <location>
        <position position="148"/>
    </location>
</feature>
<feature type="site" description="Part of the allosteric site" evidence="1">
    <location>
        <position position="151"/>
    </location>
</feature>
<feature type="site" description="Part of the allosteric site" evidence="1">
    <location>
        <position position="158"/>
    </location>
</feature>
<feature type="site" description="Part of the allosteric site" evidence="1">
    <location>
        <position position="160"/>
    </location>
</feature>
<feature type="site" description="Part of the allosteric site" evidence="1">
    <location>
        <position position="161"/>
    </location>
</feature>
<feature type="site" description="Part of the allosteric site" evidence="1">
    <location>
        <position position="254"/>
    </location>
</feature>
<comment type="function">
    <text evidence="1">Catalyzes the reversible isomerization-deamination of glucosamine 6-phosphate (GlcN6P) to form fructose 6-phosphate (Fru6P) and ammonium ion.</text>
</comment>
<comment type="catalytic activity">
    <reaction evidence="1">
        <text>alpha-D-glucosamine 6-phosphate + H2O = beta-D-fructose 6-phosphate + NH4(+)</text>
        <dbReference type="Rhea" id="RHEA:12172"/>
        <dbReference type="ChEBI" id="CHEBI:15377"/>
        <dbReference type="ChEBI" id="CHEBI:28938"/>
        <dbReference type="ChEBI" id="CHEBI:57634"/>
        <dbReference type="ChEBI" id="CHEBI:75989"/>
        <dbReference type="EC" id="3.5.99.6"/>
    </reaction>
</comment>
<comment type="activity regulation">
    <text evidence="1">Allosterically activated by N-acetylglucosamine 6-phosphate (GlcNAc6P).</text>
</comment>
<comment type="pathway">
    <text evidence="1">Amino-sugar metabolism; N-acetylneuraminate degradation; D-fructose 6-phosphate from N-acetylneuraminate: step 5/5.</text>
</comment>
<comment type="subunit">
    <text evidence="1">Homohexamer.</text>
</comment>
<comment type="similarity">
    <text evidence="1">Belongs to the glucosamine/galactosamine-6-phosphate isomerase family. NagB subfamily.</text>
</comment>
<organism>
    <name type="scientific">Enterobacter sp. (strain 638)</name>
    <dbReference type="NCBI Taxonomy" id="399742"/>
    <lineage>
        <taxon>Bacteria</taxon>
        <taxon>Pseudomonadati</taxon>
        <taxon>Pseudomonadota</taxon>
        <taxon>Gammaproteobacteria</taxon>
        <taxon>Enterobacterales</taxon>
        <taxon>Enterobacteriaceae</taxon>
        <taxon>Enterobacter</taxon>
    </lineage>
</organism>
<protein>
    <recommendedName>
        <fullName evidence="1">Glucosamine-6-phosphate deaminase</fullName>
        <ecNumber evidence="1">3.5.99.6</ecNumber>
    </recommendedName>
    <alternativeName>
        <fullName evidence="1">GlcN6P deaminase</fullName>
        <shortName evidence="1">GNPDA</shortName>
    </alternativeName>
    <alternativeName>
        <fullName evidence="1">Glucosamine-6-phosphate isomerase</fullName>
    </alternativeName>
</protein>
<gene>
    <name evidence="1" type="primary">nagB</name>
    <name type="ordered locus">Ent638_1193</name>
</gene>
<reference key="1">
    <citation type="journal article" date="2010" name="PLoS Genet.">
        <title>Genome sequence of the plant growth promoting endophytic bacterium Enterobacter sp. 638.</title>
        <authorList>
            <person name="Taghavi S."/>
            <person name="van der Lelie D."/>
            <person name="Hoffman A."/>
            <person name="Zhang Y.B."/>
            <person name="Walla M.D."/>
            <person name="Vangronsveld J."/>
            <person name="Newman L."/>
            <person name="Monchy S."/>
        </authorList>
    </citation>
    <scope>NUCLEOTIDE SEQUENCE [LARGE SCALE GENOMIC DNA]</scope>
    <source>
        <strain>638</strain>
    </source>
</reference>
<keyword id="KW-0021">Allosteric enzyme</keyword>
<keyword id="KW-0119">Carbohydrate metabolism</keyword>
<keyword id="KW-0378">Hydrolase</keyword>